<organism>
    <name type="scientific">Arabidopsis thaliana</name>
    <name type="common">Mouse-ear cress</name>
    <dbReference type="NCBI Taxonomy" id="3702"/>
    <lineage>
        <taxon>Eukaryota</taxon>
        <taxon>Viridiplantae</taxon>
        <taxon>Streptophyta</taxon>
        <taxon>Embryophyta</taxon>
        <taxon>Tracheophyta</taxon>
        <taxon>Spermatophyta</taxon>
        <taxon>Magnoliopsida</taxon>
        <taxon>eudicotyledons</taxon>
        <taxon>Gunneridae</taxon>
        <taxon>Pentapetalae</taxon>
        <taxon>rosids</taxon>
        <taxon>malvids</taxon>
        <taxon>Brassicales</taxon>
        <taxon>Brassicaceae</taxon>
        <taxon>Camelineae</taxon>
        <taxon>Arabidopsis</taxon>
    </lineage>
</organism>
<accession>Q0WSZ8</accession>
<accession>Q9SKK1</accession>
<feature type="chain" id="PRO_0000435678" description="Protein WVD2-like 6">
    <location>
        <begin position="1"/>
        <end position="403"/>
    </location>
</feature>
<feature type="region of interest" description="Disordered" evidence="2">
    <location>
        <begin position="1"/>
        <end position="179"/>
    </location>
</feature>
<feature type="region of interest" description="Disordered" evidence="2">
    <location>
        <begin position="254"/>
        <end position="403"/>
    </location>
</feature>
<feature type="compositionally biased region" description="Polar residues" evidence="2">
    <location>
        <begin position="25"/>
        <end position="56"/>
    </location>
</feature>
<feature type="compositionally biased region" description="Low complexity" evidence="2">
    <location>
        <begin position="103"/>
        <end position="118"/>
    </location>
</feature>
<feature type="compositionally biased region" description="Basic and acidic residues" evidence="2">
    <location>
        <begin position="120"/>
        <end position="132"/>
    </location>
</feature>
<feature type="compositionally biased region" description="Basic and acidic residues" evidence="2">
    <location>
        <begin position="139"/>
        <end position="153"/>
    </location>
</feature>
<feature type="compositionally biased region" description="Basic and acidic residues" evidence="2">
    <location>
        <begin position="162"/>
        <end position="171"/>
    </location>
</feature>
<feature type="compositionally biased region" description="Basic residues" evidence="2">
    <location>
        <begin position="263"/>
        <end position="273"/>
    </location>
</feature>
<feature type="compositionally biased region" description="Low complexity" evidence="2">
    <location>
        <begin position="336"/>
        <end position="348"/>
    </location>
</feature>
<feature type="compositionally biased region" description="Basic and acidic residues" evidence="2">
    <location>
        <begin position="385"/>
        <end position="394"/>
    </location>
</feature>
<feature type="modified residue" description="Phosphoserine" evidence="7 8">
    <location>
        <position position="113"/>
    </location>
</feature>
<name>WDL6_ARATH</name>
<dbReference type="EMBL" id="AC006300">
    <property type="protein sequence ID" value="AAD20707.1"/>
    <property type="status" value="ALT_SEQ"/>
    <property type="molecule type" value="Genomic_DNA"/>
</dbReference>
<dbReference type="EMBL" id="CP002685">
    <property type="protein sequence ID" value="AEC07706.1"/>
    <property type="molecule type" value="Genomic_DNA"/>
</dbReference>
<dbReference type="EMBL" id="AK227768">
    <property type="protein sequence ID" value="BAE99750.1"/>
    <property type="molecule type" value="mRNA"/>
</dbReference>
<dbReference type="RefSeq" id="NP_001324900.1">
    <property type="nucleotide sequence ID" value="NM_001336000.1"/>
</dbReference>
<dbReference type="RefSeq" id="NP_180118.2">
    <property type="nucleotide sequence ID" value="NM_128105.4"/>
</dbReference>
<dbReference type="SMR" id="Q0WSZ8"/>
<dbReference type="FunCoup" id="Q0WSZ8">
    <property type="interactions" value="186"/>
</dbReference>
<dbReference type="iPTMnet" id="Q0WSZ8"/>
<dbReference type="PaxDb" id="3702-AT2G25480.1"/>
<dbReference type="ProteomicsDB" id="242782"/>
<dbReference type="DNASU" id="817086"/>
<dbReference type="EnsemblPlants" id="AT2G25480.1">
    <property type="protein sequence ID" value="AT2G25480.1"/>
    <property type="gene ID" value="AT2G25480"/>
</dbReference>
<dbReference type="GeneID" id="817086"/>
<dbReference type="Gramene" id="AT2G25480.1">
    <property type="protein sequence ID" value="AT2G25480.1"/>
    <property type="gene ID" value="AT2G25480"/>
</dbReference>
<dbReference type="KEGG" id="ath:AT2G25480"/>
<dbReference type="Araport" id="AT2G25480"/>
<dbReference type="TAIR" id="AT2G25480"/>
<dbReference type="eggNOG" id="ENOG502REWY">
    <property type="taxonomic scope" value="Eukaryota"/>
</dbReference>
<dbReference type="HOGENOM" id="CLU_047642_0_0_1"/>
<dbReference type="InParanoid" id="Q0WSZ8"/>
<dbReference type="OMA" id="YPMEASE"/>
<dbReference type="PhylomeDB" id="Q0WSZ8"/>
<dbReference type="PRO" id="PR:Q0WSZ8"/>
<dbReference type="Proteomes" id="UP000006548">
    <property type="component" value="Chromosome 2"/>
</dbReference>
<dbReference type="ExpressionAtlas" id="Q0WSZ8">
    <property type="expression patterns" value="baseline and differential"/>
</dbReference>
<dbReference type="GO" id="GO:0005737">
    <property type="term" value="C:cytoplasm"/>
    <property type="evidence" value="ECO:0007669"/>
    <property type="project" value="UniProtKB-KW"/>
</dbReference>
<dbReference type="GO" id="GO:0005874">
    <property type="term" value="C:microtubule"/>
    <property type="evidence" value="ECO:0007669"/>
    <property type="project" value="UniProtKB-KW"/>
</dbReference>
<dbReference type="GO" id="GO:0008017">
    <property type="term" value="F:microtubule binding"/>
    <property type="evidence" value="ECO:0007669"/>
    <property type="project" value="InterPro"/>
</dbReference>
<dbReference type="InterPro" id="IPR027329">
    <property type="entry name" value="TPX2_C"/>
</dbReference>
<dbReference type="InterPro" id="IPR044833">
    <property type="entry name" value="WDL5/6"/>
</dbReference>
<dbReference type="PANTHER" id="PTHR31358">
    <property type="entry name" value="PROTEIN WVD2-LIKE 4"/>
    <property type="match status" value="1"/>
</dbReference>
<dbReference type="PANTHER" id="PTHR31358:SF29">
    <property type="entry name" value="PROTEIN WVD2-LIKE 5-RELATED"/>
    <property type="match status" value="1"/>
</dbReference>
<dbReference type="Pfam" id="PF06886">
    <property type="entry name" value="TPX2"/>
    <property type="match status" value="1"/>
</dbReference>
<keyword id="KW-0963">Cytoplasm</keyword>
<keyword id="KW-0206">Cytoskeleton</keyword>
<keyword id="KW-0493">Microtubule</keyword>
<keyword id="KW-0597">Phosphoprotein</keyword>
<keyword id="KW-1185">Reference proteome</keyword>
<proteinExistence type="evidence at protein level"/>
<evidence type="ECO:0000250" key="1">
    <source>
        <dbReference type="UniProtKB" id="Q8GYX9"/>
    </source>
</evidence>
<evidence type="ECO:0000256" key="2">
    <source>
        <dbReference type="SAM" id="MobiDB-lite"/>
    </source>
</evidence>
<evidence type="ECO:0000269" key="3">
    <source>
    </source>
</evidence>
<evidence type="ECO:0000303" key="4">
    <source>
    </source>
</evidence>
<evidence type="ECO:0000305" key="5"/>
<evidence type="ECO:0000312" key="6">
    <source>
        <dbReference type="Araport" id="AT2G25480"/>
    </source>
</evidence>
<evidence type="ECO:0007744" key="7">
    <source>
    </source>
</evidence>
<evidence type="ECO:0007744" key="8">
    <source>
    </source>
</evidence>
<reference key="1">
    <citation type="journal article" date="1999" name="Nature">
        <title>Sequence and analysis of chromosome 2 of the plant Arabidopsis thaliana.</title>
        <authorList>
            <person name="Lin X."/>
            <person name="Kaul S."/>
            <person name="Rounsley S.D."/>
            <person name="Shea T.P."/>
            <person name="Benito M.-I."/>
            <person name="Town C.D."/>
            <person name="Fujii C.Y."/>
            <person name="Mason T.M."/>
            <person name="Bowman C.L."/>
            <person name="Barnstead M.E."/>
            <person name="Feldblyum T.V."/>
            <person name="Buell C.R."/>
            <person name="Ketchum K.A."/>
            <person name="Lee J.J."/>
            <person name="Ronning C.M."/>
            <person name="Koo H.L."/>
            <person name="Moffat K.S."/>
            <person name="Cronin L.A."/>
            <person name="Shen M."/>
            <person name="Pai G."/>
            <person name="Van Aken S."/>
            <person name="Umayam L."/>
            <person name="Tallon L.J."/>
            <person name="Gill J.E."/>
            <person name="Adams M.D."/>
            <person name="Carrera A.J."/>
            <person name="Creasy T.H."/>
            <person name="Goodman H.M."/>
            <person name="Somerville C.R."/>
            <person name="Copenhaver G.P."/>
            <person name="Preuss D."/>
            <person name="Nierman W.C."/>
            <person name="White O."/>
            <person name="Eisen J.A."/>
            <person name="Salzberg S.L."/>
            <person name="Fraser C.M."/>
            <person name="Venter J.C."/>
        </authorList>
    </citation>
    <scope>NUCLEOTIDE SEQUENCE [LARGE SCALE GENOMIC DNA]</scope>
    <source>
        <strain>cv. Columbia</strain>
    </source>
</reference>
<reference key="2">
    <citation type="journal article" date="2017" name="Plant J.">
        <title>Araport11: a complete reannotation of the Arabidopsis thaliana reference genome.</title>
        <authorList>
            <person name="Cheng C.Y."/>
            <person name="Krishnakumar V."/>
            <person name="Chan A.P."/>
            <person name="Thibaud-Nissen F."/>
            <person name="Schobel S."/>
            <person name="Town C.D."/>
        </authorList>
    </citation>
    <scope>GENOME REANNOTATION</scope>
    <source>
        <strain>cv. Columbia</strain>
    </source>
</reference>
<reference key="3">
    <citation type="submission" date="2006-07" db="EMBL/GenBank/DDBJ databases">
        <title>Large-scale analysis of RIKEN Arabidopsis full-length (RAFL) cDNAs.</title>
        <authorList>
            <person name="Totoki Y."/>
            <person name="Seki M."/>
            <person name="Ishida J."/>
            <person name="Nakajima M."/>
            <person name="Enju A."/>
            <person name="Kamiya A."/>
            <person name="Narusaka M."/>
            <person name="Shin-i T."/>
            <person name="Nakagawa M."/>
            <person name="Sakamoto N."/>
            <person name="Oishi K."/>
            <person name="Kohara Y."/>
            <person name="Kobayashi M."/>
            <person name="Toyoda A."/>
            <person name="Sakaki Y."/>
            <person name="Sakurai T."/>
            <person name="Iida K."/>
            <person name="Akiyama K."/>
            <person name="Satou M."/>
            <person name="Toyoda T."/>
            <person name="Konagaya A."/>
            <person name="Carninci P."/>
            <person name="Kawai J."/>
            <person name="Hayashizaki Y."/>
            <person name="Shinozaki K."/>
        </authorList>
    </citation>
    <scope>NUCLEOTIDE SEQUENCE [LARGE SCALE MRNA]</scope>
    <source>
        <strain>cv. Columbia</strain>
    </source>
</reference>
<reference key="4">
    <citation type="journal article" date="2009" name="J. Proteomics">
        <title>Phosphoproteomic analysis of nuclei-enriched fractions from Arabidopsis thaliana.</title>
        <authorList>
            <person name="Jones A.M.E."/>
            <person name="MacLean D."/>
            <person name="Studholme D.J."/>
            <person name="Serna-Sanz A."/>
            <person name="Andreasson E."/>
            <person name="Rathjen J.P."/>
            <person name="Peck S.C."/>
        </authorList>
    </citation>
    <scope>PHOSPHORYLATION [LARGE SCALE ANALYSIS] AT SER-113</scope>
    <scope>IDENTIFICATION BY MASS SPECTROMETRY [LARGE SCALE ANALYSIS]</scope>
    <source>
        <strain>cv. Columbia</strain>
    </source>
</reference>
<reference key="5">
    <citation type="journal article" date="2009" name="Plant Physiol.">
        <title>Large-scale Arabidopsis phosphoproteome profiling reveals novel chloroplast kinase substrates and phosphorylation networks.</title>
        <authorList>
            <person name="Reiland S."/>
            <person name="Messerli G."/>
            <person name="Baerenfaller K."/>
            <person name="Gerrits B."/>
            <person name="Endler A."/>
            <person name="Grossmann J."/>
            <person name="Gruissem W."/>
            <person name="Baginsky S."/>
        </authorList>
    </citation>
    <scope>PHOSPHORYLATION [LARGE SCALE ANALYSIS] AT SER-113</scope>
    <scope>IDENTIFICATION BY MASS SPECTROMETRY [LARGE SCALE ANALYSIS]</scope>
</reference>
<reference key="6">
    <citation type="journal article" date="2013" name="Plant Cell">
        <title>Light-regulated hypocotyl elongation involves proteasome-dependent degradation of the microtubule regulatory protein WDL3 in Arabidopsis.</title>
        <authorList>
            <person name="Liu X."/>
            <person name="Qin T."/>
            <person name="Ma Q."/>
            <person name="Sun J."/>
            <person name="Liu Z."/>
            <person name="Yuan M."/>
            <person name="Mao T."/>
        </authorList>
    </citation>
    <scope>TISSUE SPECIFICITY</scope>
</reference>
<comment type="function">
    <text evidence="1">Microtubule-associated protein (MAP) that regulates the orientation of interphase cortical microtubules.</text>
</comment>
<comment type="subcellular location">
    <subcellularLocation>
        <location evidence="1">Cytoplasm</location>
        <location evidence="1">Cytoskeleton</location>
    </subcellularLocation>
</comment>
<comment type="tissue specificity">
    <text evidence="3">Expressed in seedlings.</text>
</comment>
<comment type="similarity">
    <text evidence="5">Belongs to the TPX2 family.</text>
</comment>
<comment type="sequence caution" evidence="5">
    <conflict type="erroneous gene model prediction">
        <sequence resource="EMBL-CDS" id="AAD20707"/>
    </conflict>
</comment>
<gene>
    <name evidence="4" type="primary">WDL6</name>
    <name evidence="6" type="ordered locus">At2g25480</name>
</gene>
<protein>
    <recommendedName>
        <fullName evidence="5">Protein WVD2-like 6</fullName>
    </recommendedName>
</protein>
<sequence>MDSESVVAADGADCAIANGEVTMEGDSSNGNGGTSENLECCSTQHPMEASEGTQNEQVDDSKQMRGQKVQGRVKHEKTSGGKNIPSVLVKKKKDGKVVASNGSVAPNVKPVKSPKSKSLNGREAHVTKHGNHDSLPAEGTRDKPKLRETRKQVNDTSEDDTQYPKEDDGKPRRASALPNYGFSFRCDQRAEKRREFYSKLEEKIHAKEEEKNTVQAKSKETQEAELKMLRKSLNFKATPMPTFYQEPQLPKTELKKIAITRPKSPKLGRKKTNSRADSEEAITIQTPRFGRLSLDEKTPKDNPVVEGSVPGETKKPPVRKSLPRLPSEKTNLSNGKVAPAKAVTASTKAKSERKKPDKDVDDLSQSSPVDDNADPEDSQEQAPRVNEDRNESHMVVEVVAVEP</sequence>